<name>Y4KG_SINFN</name>
<gene>
    <name type="ordered locus">NGR_a02890</name>
    <name type="ORF">y4kG</name>
</gene>
<organism>
    <name type="scientific">Sinorhizobium fredii (strain NBRC 101917 / NGR234)</name>
    <dbReference type="NCBI Taxonomy" id="394"/>
    <lineage>
        <taxon>Bacteria</taxon>
        <taxon>Pseudomonadati</taxon>
        <taxon>Pseudomonadota</taxon>
        <taxon>Alphaproteobacteria</taxon>
        <taxon>Hyphomicrobiales</taxon>
        <taxon>Rhizobiaceae</taxon>
        <taxon>Sinorhizobium/Ensifer group</taxon>
        <taxon>Sinorhizobium</taxon>
    </lineage>
</organism>
<keyword id="KW-0472">Membrane</keyword>
<keyword id="KW-0614">Plasmid</keyword>
<keyword id="KW-1185">Reference proteome</keyword>
<keyword id="KW-0812">Transmembrane</keyword>
<keyword id="KW-1133">Transmembrane helix</keyword>
<geneLocation type="plasmid">
    <name>sym pNGR234a</name>
</geneLocation>
<comment type="subcellular location">
    <subcellularLocation>
        <location evidence="2">Membrane</location>
        <topology evidence="2">Single-pass membrane protein</topology>
    </subcellularLocation>
</comment>
<accession>P55527</accession>
<sequence length="69" mass="7687">MFLLQFAQRVKDLSMVYEWDECNARRGYILKMLGAIDVAVAVASVPTLFVVTAISHDLMSALATPQVDR</sequence>
<feature type="chain" id="PRO_0000200889" description="Uncharacterized protein y4kG">
    <location>
        <begin position="1"/>
        <end position="69"/>
    </location>
</feature>
<feature type="transmembrane region" description="Helical" evidence="1">
    <location>
        <begin position="32"/>
        <end position="54"/>
    </location>
</feature>
<evidence type="ECO:0000255" key="1"/>
<evidence type="ECO:0000305" key="2"/>
<proteinExistence type="predicted"/>
<reference key="1">
    <citation type="journal article" date="1997" name="Nature">
        <title>Molecular basis of symbiosis between Rhizobium and legumes.</title>
        <authorList>
            <person name="Freiberg C.A."/>
            <person name="Fellay R."/>
            <person name="Bairoch A."/>
            <person name="Broughton W.J."/>
            <person name="Rosenthal A."/>
            <person name="Perret X."/>
        </authorList>
    </citation>
    <scope>NUCLEOTIDE SEQUENCE [LARGE SCALE GENOMIC DNA]</scope>
    <source>
        <strain>NBRC 101917 / NGR234</strain>
    </source>
</reference>
<reference key="2">
    <citation type="journal article" date="2009" name="Appl. Environ. Microbiol.">
        <title>Rhizobium sp. strain NGR234 possesses a remarkable number of secretion systems.</title>
        <authorList>
            <person name="Schmeisser C."/>
            <person name="Liesegang H."/>
            <person name="Krysciak D."/>
            <person name="Bakkou N."/>
            <person name="Le Quere A."/>
            <person name="Wollherr A."/>
            <person name="Heinemeyer I."/>
            <person name="Morgenstern B."/>
            <person name="Pommerening-Roeser A."/>
            <person name="Flores M."/>
            <person name="Palacios R."/>
            <person name="Brenner S."/>
            <person name="Gottschalk G."/>
            <person name="Schmitz R.A."/>
            <person name="Broughton W.J."/>
            <person name="Perret X."/>
            <person name="Strittmatter A.W."/>
            <person name="Streit W.R."/>
        </authorList>
    </citation>
    <scope>NUCLEOTIDE SEQUENCE [LARGE SCALE GENOMIC DNA]</scope>
    <source>
        <strain>NBRC 101917 / NGR234</strain>
    </source>
</reference>
<dbReference type="EMBL" id="U00090">
    <property type="protein sequence ID" value="AAB91738.1"/>
    <property type="molecule type" value="Genomic_DNA"/>
</dbReference>
<dbReference type="RefSeq" id="NP_443936.1">
    <property type="nucleotide sequence ID" value="NC_000914.2"/>
</dbReference>
<dbReference type="KEGG" id="rhi:NGR_a02890"/>
<dbReference type="HOGENOM" id="CLU_2773095_0_0_5"/>
<dbReference type="Proteomes" id="UP000001054">
    <property type="component" value="Plasmid pNGR234a"/>
</dbReference>
<dbReference type="GO" id="GO:0016020">
    <property type="term" value="C:membrane"/>
    <property type="evidence" value="ECO:0007669"/>
    <property type="project" value="UniProtKB-SubCell"/>
</dbReference>
<protein>
    <recommendedName>
        <fullName>Uncharacterized protein y4kG</fullName>
    </recommendedName>
</protein>